<proteinExistence type="inferred from homology"/>
<comment type="function">
    <text evidence="4">Highly selective calcium channel localized to the inner mitochondrial membrane, which mediates calcium uptake into the mitochondrial matrix (PubMed:29995856). Mitochondrial calcium homeostasis plays key roles in cellular physiology and regulates ATP production, cytoplasmic calcium signals and activation of cell death pathways (PubMed:29995856). Sufficient to operate as a pore-forming channel without the need of calcium-sensor or auxiliary subunit (PubMed:29995856).</text>
</comment>
<comment type="catalytic activity">
    <reaction evidence="4">
        <text>Ca(2+)(in) = Ca(2+)(out)</text>
        <dbReference type="Rhea" id="RHEA:29671"/>
        <dbReference type="ChEBI" id="CHEBI:29108"/>
    </reaction>
</comment>
<comment type="subunit">
    <text evidence="1">Homotetramer, assembles in a dimer or dimers configuration with two interfaces.</text>
</comment>
<comment type="subcellular location">
    <subcellularLocation>
        <location evidence="4">Mitochondrion inner membrane</location>
        <topology evidence="1">Multi-pass membrane protein</topology>
    </subcellularLocation>
</comment>
<comment type="domain">
    <text evidence="1">The selectivity filter, in which calcium ions are arranged in single file, is composed of two acidic rings separated by one helical turn along the central axis of the channel pore.</text>
</comment>
<comment type="similarity">
    <text evidence="6">Belongs to the MCU (TC 1.A.77) family.</text>
</comment>
<dbReference type="EMBL" id="HG970332">
    <property type="protein sequence ID" value="CEF75840.1"/>
    <property type="molecule type" value="Genomic_DNA"/>
</dbReference>
<dbReference type="SMR" id="A0A0E0RX65"/>
<dbReference type="STRING" id="229533.A0A0E0RX65"/>
<dbReference type="VEuPathDB" id="FungiDB:FGRAMPH1_01G08073"/>
<dbReference type="eggNOG" id="KOG2966">
    <property type="taxonomic scope" value="Eukaryota"/>
</dbReference>
<dbReference type="InParanoid" id="A0A0E0RX65"/>
<dbReference type="Proteomes" id="UP000070720">
    <property type="component" value="Chromosome 1"/>
</dbReference>
<dbReference type="GO" id="GO:0005743">
    <property type="term" value="C:mitochondrial inner membrane"/>
    <property type="evidence" value="ECO:0000314"/>
    <property type="project" value="UniProtKB"/>
</dbReference>
<dbReference type="GO" id="GO:1990246">
    <property type="term" value="C:uniplex complex"/>
    <property type="evidence" value="ECO:0007669"/>
    <property type="project" value="TreeGrafter"/>
</dbReference>
<dbReference type="GO" id="GO:0005262">
    <property type="term" value="F:calcium channel activity"/>
    <property type="evidence" value="ECO:0000314"/>
    <property type="project" value="UniProtKB"/>
</dbReference>
<dbReference type="GO" id="GO:0046872">
    <property type="term" value="F:metal ion binding"/>
    <property type="evidence" value="ECO:0007669"/>
    <property type="project" value="UniProtKB-KW"/>
</dbReference>
<dbReference type="GO" id="GO:0015292">
    <property type="term" value="F:uniporter activity"/>
    <property type="evidence" value="ECO:0007669"/>
    <property type="project" value="TreeGrafter"/>
</dbReference>
<dbReference type="GO" id="GO:0036444">
    <property type="term" value="P:calcium import into the mitochondrion"/>
    <property type="evidence" value="ECO:0000314"/>
    <property type="project" value="UniProtKB"/>
</dbReference>
<dbReference type="GO" id="GO:0051560">
    <property type="term" value="P:mitochondrial calcium ion homeostasis"/>
    <property type="evidence" value="ECO:0007669"/>
    <property type="project" value="InterPro"/>
</dbReference>
<dbReference type="InterPro" id="IPR006769">
    <property type="entry name" value="MCU_C"/>
</dbReference>
<dbReference type="InterPro" id="IPR039055">
    <property type="entry name" value="MCU_fam"/>
</dbReference>
<dbReference type="PANTHER" id="PTHR13462">
    <property type="entry name" value="CALCIUM UNIPORTER PROTEIN, MITOCHONDRIAL"/>
    <property type="match status" value="1"/>
</dbReference>
<dbReference type="PANTHER" id="PTHR13462:SF10">
    <property type="entry name" value="CALCIUM UNIPORTER PROTEIN, MITOCHONDRIAL"/>
    <property type="match status" value="1"/>
</dbReference>
<dbReference type="Pfam" id="PF04678">
    <property type="entry name" value="MCU"/>
    <property type="match status" value="1"/>
</dbReference>
<gene>
    <name evidence="5" type="primary">MCU</name>
    <name evidence="7" type="ORF">FGRAMPH1_01T08073</name>
</gene>
<name>MCU_GIBZE</name>
<evidence type="ECO:0000250" key="1">
    <source>
        <dbReference type="UniProtKB" id="E9DVV4"/>
    </source>
</evidence>
<evidence type="ECO:0000255" key="2"/>
<evidence type="ECO:0000256" key="3">
    <source>
        <dbReference type="SAM" id="MobiDB-lite"/>
    </source>
</evidence>
<evidence type="ECO:0000269" key="4">
    <source>
    </source>
</evidence>
<evidence type="ECO:0000303" key="5">
    <source>
    </source>
</evidence>
<evidence type="ECO:0000305" key="6"/>
<evidence type="ECO:0000312" key="7">
    <source>
        <dbReference type="EMBL" id="CEF75840.1"/>
    </source>
</evidence>
<keyword id="KW-0106">Calcium</keyword>
<keyword id="KW-0107">Calcium channel</keyword>
<keyword id="KW-0109">Calcium transport</keyword>
<keyword id="KW-0175">Coiled coil</keyword>
<keyword id="KW-0407">Ion channel</keyword>
<keyword id="KW-0406">Ion transport</keyword>
<keyword id="KW-0472">Membrane</keyword>
<keyword id="KW-0479">Metal-binding</keyword>
<keyword id="KW-0496">Mitochondrion</keyword>
<keyword id="KW-0999">Mitochondrion inner membrane</keyword>
<keyword id="KW-1185">Reference proteome</keyword>
<keyword id="KW-0809">Transit peptide</keyword>
<keyword id="KW-0812">Transmembrane</keyword>
<keyword id="KW-1133">Transmembrane helix</keyword>
<keyword id="KW-0813">Transport</keyword>
<organism>
    <name type="scientific">Gibberella zeae (strain ATCC MYA-4620 / CBS 123657 / FGSC 9075 / NRRL 31084 / PH-1)</name>
    <name type="common">Wheat head blight fungus</name>
    <name type="synonym">Fusarium graminearum</name>
    <dbReference type="NCBI Taxonomy" id="229533"/>
    <lineage>
        <taxon>Eukaryota</taxon>
        <taxon>Fungi</taxon>
        <taxon>Dikarya</taxon>
        <taxon>Ascomycota</taxon>
        <taxon>Pezizomycotina</taxon>
        <taxon>Sordariomycetes</taxon>
        <taxon>Hypocreomycetidae</taxon>
        <taxon>Hypocreales</taxon>
        <taxon>Nectriaceae</taxon>
        <taxon>Fusarium</taxon>
    </lineage>
</organism>
<protein>
    <recommendedName>
        <fullName evidence="6">Calcium uniporter protein, mitochondrial</fullName>
        <shortName evidence="5">FgMCU</shortName>
    </recommendedName>
</protein>
<feature type="transit peptide" description="Mitochondrion" evidence="2">
    <location>
        <begin position="1"/>
        <end position="54"/>
    </location>
</feature>
<feature type="chain" id="PRO_0000460496" description="Calcium uniporter protein, mitochondrial" evidence="1">
    <location>
        <begin position="55"/>
        <end position="479"/>
    </location>
</feature>
<feature type="topological domain" description="Mitochondrial matrix" evidence="1">
    <location>
        <begin position="55"/>
        <end position="323"/>
    </location>
</feature>
<feature type="transmembrane region" description="Helical" evidence="1">
    <location>
        <begin position="324"/>
        <end position="344"/>
    </location>
</feature>
<feature type="topological domain" description="Mitochondrial intermembrane" evidence="1">
    <location>
        <begin position="345"/>
        <end position="354"/>
    </location>
</feature>
<feature type="transmembrane region" description="Helical" evidence="1">
    <location>
        <begin position="355"/>
        <end position="375"/>
    </location>
</feature>
<feature type="topological domain" description="Mitochondrial matrix" evidence="1">
    <location>
        <begin position="376"/>
        <end position="479"/>
    </location>
</feature>
<feature type="region of interest" description="Disordered" evidence="3">
    <location>
        <begin position="56"/>
        <end position="125"/>
    </location>
</feature>
<feature type="region of interest" description="Disordered" evidence="3">
    <location>
        <begin position="206"/>
        <end position="238"/>
    </location>
</feature>
<feature type="region of interest" description="Disordered" evidence="3">
    <location>
        <begin position="445"/>
        <end position="479"/>
    </location>
</feature>
<feature type="coiled-coil region" evidence="2">
    <location>
        <begin position="59"/>
        <end position="79"/>
    </location>
</feature>
<feature type="short sequence motif" description="Selectivity filter" evidence="1">
    <location>
        <begin position="350"/>
        <end position="358"/>
    </location>
</feature>
<feature type="compositionally biased region" description="Basic and acidic residues" evidence="3">
    <location>
        <begin position="60"/>
        <end position="75"/>
    </location>
</feature>
<feature type="compositionally biased region" description="Polar residues" evidence="3">
    <location>
        <begin position="83"/>
        <end position="93"/>
    </location>
</feature>
<feature type="compositionally biased region" description="Basic and acidic residues" evidence="3">
    <location>
        <begin position="94"/>
        <end position="122"/>
    </location>
</feature>
<feature type="compositionally biased region" description="Basic and acidic residues" evidence="3">
    <location>
        <begin position="206"/>
        <end position="224"/>
    </location>
</feature>
<feature type="compositionally biased region" description="Basic and acidic residues" evidence="3">
    <location>
        <begin position="445"/>
        <end position="462"/>
    </location>
</feature>
<feature type="binding site" evidence="1">
    <location>
        <position position="354"/>
    </location>
    <ligand>
        <name>Ca(2+)</name>
        <dbReference type="ChEBI" id="CHEBI:29108"/>
    </ligand>
</feature>
<reference key="1">
    <citation type="journal article" date="2007" name="Science">
        <title>The Fusarium graminearum genome reveals a link between localized polymorphism and pathogen specialization.</title>
        <authorList>
            <person name="Cuomo C.A."/>
            <person name="Gueldener U."/>
            <person name="Xu J.-R."/>
            <person name="Trail F."/>
            <person name="Turgeon B.G."/>
            <person name="Di Pietro A."/>
            <person name="Walton J.D."/>
            <person name="Ma L.-J."/>
            <person name="Baker S.E."/>
            <person name="Rep M."/>
            <person name="Adam G."/>
            <person name="Antoniw J."/>
            <person name="Baldwin T."/>
            <person name="Calvo S.E."/>
            <person name="Chang Y.-L."/>
            <person name="DeCaprio D."/>
            <person name="Gale L.R."/>
            <person name="Gnerre S."/>
            <person name="Goswami R.S."/>
            <person name="Hammond-Kosack K."/>
            <person name="Harris L.J."/>
            <person name="Hilburn K."/>
            <person name="Kennell J.C."/>
            <person name="Kroken S."/>
            <person name="Magnuson J.K."/>
            <person name="Mannhaupt G."/>
            <person name="Mauceli E.W."/>
            <person name="Mewes H.-W."/>
            <person name="Mitterbauer R."/>
            <person name="Muehlbauer G."/>
            <person name="Muensterkoetter M."/>
            <person name="Nelson D."/>
            <person name="O'Donnell K."/>
            <person name="Ouellet T."/>
            <person name="Qi W."/>
            <person name="Quesneville H."/>
            <person name="Roncero M.I.G."/>
            <person name="Seong K.-Y."/>
            <person name="Tetko I.V."/>
            <person name="Urban M."/>
            <person name="Waalwijk C."/>
            <person name="Ward T.J."/>
            <person name="Yao J."/>
            <person name="Birren B.W."/>
            <person name="Kistler H.C."/>
        </authorList>
    </citation>
    <scope>NUCLEOTIDE SEQUENCE [LARGE SCALE GENOMIC DNA]</scope>
    <source>
        <strain>ATCC MYA-4620 / CBS 123657 / FGSC 9075 / NRRL 31084 / PH-1</strain>
    </source>
</reference>
<reference key="2">
    <citation type="journal article" date="2010" name="Nature">
        <title>Comparative genomics reveals mobile pathogenicity chromosomes in Fusarium.</title>
        <authorList>
            <person name="Ma L.-J."/>
            <person name="van der Does H.C."/>
            <person name="Borkovich K.A."/>
            <person name="Coleman J.J."/>
            <person name="Daboussi M.-J."/>
            <person name="Di Pietro A."/>
            <person name="Dufresne M."/>
            <person name="Freitag M."/>
            <person name="Grabherr M."/>
            <person name="Henrissat B."/>
            <person name="Houterman P.M."/>
            <person name="Kang S."/>
            <person name="Shim W.-B."/>
            <person name="Woloshuk C."/>
            <person name="Xie X."/>
            <person name="Xu J.-R."/>
            <person name="Antoniw J."/>
            <person name="Baker S.E."/>
            <person name="Bluhm B.H."/>
            <person name="Breakspear A."/>
            <person name="Brown D.W."/>
            <person name="Butchko R.A.E."/>
            <person name="Chapman S."/>
            <person name="Coulson R."/>
            <person name="Coutinho P.M."/>
            <person name="Danchin E.G.J."/>
            <person name="Diener A."/>
            <person name="Gale L.R."/>
            <person name="Gardiner D.M."/>
            <person name="Goff S."/>
            <person name="Hammond-Kosack K.E."/>
            <person name="Hilburn K."/>
            <person name="Hua-Van A."/>
            <person name="Jonkers W."/>
            <person name="Kazan K."/>
            <person name="Kodira C.D."/>
            <person name="Koehrsen M."/>
            <person name="Kumar L."/>
            <person name="Lee Y.-H."/>
            <person name="Li L."/>
            <person name="Manners J.M."/>
            <person name="Miranda-Saavedra D."/>
            <person name="Mukherjee M."/>
            <person name="Park G."/>
            <person name="Park J."/>
            <person name="Park S.-Y."/>
            <person name="Proctor R.H."/>
            <person name="Regev A."/>
            <person name="Ruiz-Roldan M.C."/>
            <person name="Sain D."/>
            <person name="Sakthikumar S."/>
            <person name="Sykes S."/>
            <person name="Schwartz D.C."/>
            <person name="Turgeon B.G."/>
            <person name="Wapinski I."/>
            <person name="Yoder O."/>
            <person name="Young S."/>
            <person name="Zeng Q."/>
            <person name="Zhou S."/>
            <person name="Galagan J."/>
            <person name="Cuomo C.A."/>
            <person name="Kistler H.C."/>
            <person name="Rep M."/>
        </authorList>
    </citation>
    <scope>GENOME REANNOTATION</scope>
    <source>
        <strain>ATCC MYA-4620 / CBS 123657 / FGSC 9075 / NRRL 31084 / PH-1</strain>
    </source>
</reference>
<reference key="3">
    <citation type="journal article" date="2015" name="BMC Genomics">
        <title>The completed genome sequence of the pathogenic ascomycete fungus Fusarium graminearum.</title>
        <authorList>
            <person name="King R."/>
            <person name="Urban M."/>
            <person name="Hammond-Kosack M.C.U."/>
            <person name="Hassani-Pak K."/>
            <person name="Hammond-Kosack K.E."/>
        </authorList>
    </citation>
    <scope>NUCLEOTIDE SEQUENCE [LARGE SCALE GENOMIC DNA]</scope>
    <source>
        <strain>ATCC MYA-4620 / CBS 123657 / FGSC 9075 / NRRL 31084 / PH-1</strain>
    </source>
</reference>
<reference key="4">
    <citation type="journal article" date="2018" name="Nature">
        <title>X-ray and cryo-EM structures of the mitochondrial calcium uniporter.</title>
        <authorList>
            <person name="Fan C."/>
            <person name="Fan M."/>
            <person name="Orlando B.J."/>
            <person name="Fastman N.M."/>
            <person name="Zhang J."/>
            <person name="Xu Y."/>
            <person name="Chambers M.G."/>
            <person name="Xu X."/>
            <person name="Perry K."/>
            <person name="Liao M."/>
            <person name="Feng L."/>
        </authorList>
    </citation>
    <scope>FUNCTION</scope>
    <scope>TRANSPORTER ACTIVITY</scope>
    <scope>SUBCELLULAR LOCATION</scope>
</reference>
<accession>A0A0E0RX65</accession>
<sequence>MNHALRRATLGLSPGLRASRLQQSFAKHQIPAVYRCEAASTPLQRAFTTSRCFRQETAAESEKDDAARREEQSERARKRQARNVTSGSSAQTLENDRPWHRADSGADPDAPKDVPENKDMKKGRLLTTPTRLLKLILPMPFHPEQEHVNRPVEGDVDDAGATVEPLALLIHPHQPLSYLERLIQAEIPPVQYKGREKLPDIVFRAEADQNEQDGRKDDNKKKDNANVASYSGLGHEGPTNKEANWVRWSGSTEIGDFIRDAARGREFAINVEGFDRELRVAVPSFRDRTYYMRMTLRRMSRDIESMSKVKNECDTLAHQGAHRLAQGGFAALAGWWGVVYYVTFHTQAGWDLVEPVTYLAGLTTVMGAYLWFLYISRDLSYKAAMKVTVSKRQAALYQERGFDQNRWDQIIHEANNLRKEIKIIASEYDVDWDEKKDLGGEEVKKVLEEEKQGRDGTKVTEGKDEDDGPGSSDKIKKKQ</sequence>